<dbReference type="EC" id="4.1.1.49" evidence="1"/>
<dbReference type="EMBL" id="CP000390">
    <property type="protein sequence ID" value="ABG64873.1"/>
    <property type="molecule type" value="Genomic_DNA"/>
</dbReference>
<dbReference type="SMR" id="Q11CK2"/>
<dbReference type="STRING" id="266779.Meso_3502"/>
<dbReference type="KEGG" id="mes:Meso_3502"/>
<dbReference type="eggNOG" id="COG1866">
    <property type="taxonomic scope" value="Bacteria"/>
</dbReference>
<dbReference type="HOGENOM" id="CLU_018247_0_1_5"/>
<dbReference type="OrthoDB" id="9806325at2"/>
<dbReference type="UniPathway" id="UPA00138"/>
<dbReference type="GO" id="GO:0005829">
    <property type="term" value="C:cytosol"/>
    <property type="evidence" value="ECO:0007669"/>
    <property type="project" value="TreeGrafter"/>
</dbReference>
<dbReference type="GO" id="GO:0005524">
    <property type="term" value="F:ATP binding"/>
    <property type="evidence" value="ECO:0007669"/>
    <property type="project" value="UniProtKB-UniRule"/>
</dbReference>
<dbReference type="GO" id="GO:0046872">
    <property type="term" value="F:metal ion binding"/>
    <property type="evidence" value="ECO:0007669"/>
    <property type="project" value="UniProtKB-KW"/>
</dbReference>
<dbReference type="GO" id="GO:0004612">
    <property type="term" value="F:phosphoenolpyruvate carboxykinase (ATP) activity"/>
    <property type="evidence" value="ECO:0007669"/>
    <property type="project" value="UniProtKB-UniRule"/>
</dbReference>
<dbReference type="GO" id="GO:0006094">
    <property type="term" value="P:gluconeogenesis"/>
    <property type="evidence" value="ECO:0007669"/>
    <property type="project" value="UniProtKB-UniRule"/>
</dbReference>
<dbReference type="CDD" id="cd00484">
    <property type="entry name" value="PEPCK_ATP"/>
    <property type="match status" value="1"/>
</dbReference>
<dbReference type="Gene3D" id="3.90.228.20">
    <property type="match status" value="1"/>
</dbReference>
<dbReference type="Gene3D" id="3.40.449.10">
    <property type="entry name" value="Phosphoenolpyruvate Carboxykinase, domain 1"/>
    <property type="match status" value="1"/>
</dbReference>
<dbReference type="Gene3D" id="2.170.8.10">
    <property type="entry name" value="Phosphoenolpyruvate Carboxykinase, domain 2"/>
    <property type="match status" value="1"/>
</dbReference>
<dbReference type="HAMAP" id="MF_00453">
    <property type="entry name" value="PEPCK_ATP"/>
    <property type="match status" value="1"/>
</dbReference>
<dbReference type="InterPro" id="IPR001272">
    <property type="entry name" value="PEP_carboxykinase_ATP"/>
</dbReference>
<dbReference type="InterPro" id="IPR013035">
    <property type="entry name" value="PEP_carboxykinase_C"/>
</dbReference>
<dbReference type="InterPro" id="IPR008210">
    <property type="entry name" value="PEP_carboxykinase_N"/>
</dbReference>
<dbReference type="InterPro" id="IPR015994">
    <property type="entry name" value="PEPCK_ATP_CS"/>
</dbReference>
<dbReference type="NCBIfam" id="TIGR00224">
    <property type="entry name" value="pckA"/>
    <property type="match status" value="1"/>
</dbReference>
<dbReference type="NCBIfam" id="NF006820">
    <property type="entry name" value="PRK09344.1-2"/>
    <property type="match status" value="1"/>
</dbReference>
<dbReference type="NCBIfam" id="NF006821">
    <property type="entry name" value="PRK09344.1-3"/>
    <property type="match status" value="1"/>
</dbReference>
<dbReference type="NCBIfam" id="NF006822">
    <property type="entry name" value="PRK09344.1-4"/>
    <property type="match status" value="1"/>
</dbReference>
<dbReference type="PANTHER" id="PTHR30031:SF0">
    <property type="entry name" value="PHOSPHOENOLPYRUVATE CARBOXYKINASE (ATP)"/>
    <property type="match status" value="1"/>
</dbReference>
<dbReference type="PANTHER" id="PTHR30031">
    <property type="entry name" value="PHOSPHOENOLPYRUVATE CARBOXYKINASE ATP"/>
    <property type="match status" value="1"/>
</dbReference>
<dbReference type="Pfam" id="PF01293">
    <property type="entry name" value="PEPCK_ATP"/>
    <property type="match status" value="1"/>
</dbReference>
<dbReference type="PIRSF" id="PIRSF006294">
    <property type="entry name" value="PEP_crbxkin"/>
    <property type="match status" value="1"/>
</dbReference>
<dbReference type="SUPFAM" id="SSF68923">
    <property type="entry name" value="PEP carboxykinase N-terminal domain"/>
    <property type="match status" value="1"/>
</dbReference>
<dbReference type="SUPFAM" id="SSF53795">
    <property type="entry name" value="PEP carboxykinase-like"/>
    <property type="match status" value="1"/>
</dbReference>
<dbReference type="PROSITE" id="PS00532">
    <property type="entry name" value="PEPCK_ATP"/>
    <property type="match status" value="1"/>
</dbReference>
<protein>
    <recommendedName>
        <fullName evidence="1">Phosphoenolpyruvate carboxykinase (ATP)</fullName>
        <shortName evidence="1">PCK</shortName>
        <shortName evidence="1">PEP carboxykinase</shortName>
        <shortName evidence="1">PEPCK</shortName>
        <ecNumber evidence="1">4.1.1.49</ecNumber>
    </recommendedName>
</protein>
<name>PCKA_CHESB</name>
<sequence>MQETGLRNPTNGIETSGLKTSGTVFFNLTEPQLYEEAIRRAEARISAHGALVAETGQHTGRSPKDKFIVRDASTENEIWWDNNKPLSGEHFEALYEDFKRHAESLDLFVQDLVGGADPENALPVRVVTEYAWHSLFIRNLLIRPMRSELKSFVPQMTVIDLPSFRADPKRHGCRTETIIAMDLKRMIVLIGGTSYAGEMKKSVFTALNYLLPAKGVMPMHCSANEGSEGDVAIFFGLSGTGKTTLSAEPSRTLIGDDEHGWGPHGIFNFEGGCYAKTIKLSREAEPEIFATTERFGTVLENVVVDEHGVPDFDDGSRTENTRCAYPLHFISNASETGRAGQPKNVIMLTADAFGVMPPIAKLTPAQAMYHFLSGYTAKVAGTEKGVTEPEATFSTCFGAPFMPRHPSVYGNLLRDLIAEHEVDCWLVNTGWTGGAYGTGHRMPIKVTRALLSAALDGSLRTAQFRTDPNFGFAVPVAVPGVDGTILDPRSTWADKAAYDVQAERLVSMFVANFGKFENHVEADVMNASPQIRQAAE</sequence>
<accession>Q11CK2</accession>
<comment type="function">
    <text evidence="1">Involved in the gluconeogenesis. Catalyzes the conversion of oxaloacetate (OAA) to phosphoenolpyruvate (PEP) through direct phosphoryl transfer between the nucleoside triphosphate and OAA.</text>
</comment>
<comment type="catalytic activity">
    <reaction evidence="1">
        <text>oxaloacetate + ATP = phosphoenolpyruvate + ADP + CO2</text>
        <dbReference type="Rhea" id="RHEA:18617"/>
        <dbReference type="ChEBI" id="CHEBI:16452"/>
        <dbReference type="ChEBI" id="CHEBI:16526"/>
        <dbReference type="ChEBI" id="CHEBI:30616"/>
        <dbReference type="ChEBI" id="CHEBI:58702"/>
        <dbReference type="ChEBI" id="CHEBI:456216"/>
        <dbReference type="EC" id="4.1.1.49"/>
    </reaction>
</comment>
<comment type="cofactor">
    <cofactor evidence="1">
        <name>Mn(2+)</name>
        <dbReference type="ChEBI" id="CHEBI:29035"/>
    </cofactor>
    <text evidence="1">Binds 1 Mn(2+) ion per subunit.</text>
</comment>
<comment type="pathway">
    <text evidence="1">Carbohydrate biosynthesis; gluconeogenesis.</text>
</comment>
<comment type="subcellular location">
    <subcellularLocation>
        <location evidence="1">Cytoplasm</location>
    </subcellularLocation>
</comment>
<comment type="similarity">
    <text evidence="1">Belongs to the phosphoenolpyruvate carboxykinase (ATP) family.</text>
</comment>
<evidence type="ECO:0000255" key="1">
    <source>
        <dbReference type="HAMAP-Rule" id="MF_00453"/>
    </source>
</evidence>
<organism>
    <name type="scientific">Chelativorans sp. (strain BNC1)</name>
    <dbReference type="NCBI Taxonomy" id="266779"/>
    <lineage>
        <taxon>Bacteria</taxon>
        <taxon>Pseudomonadati</taxon>
        <taxon>Pseudomonadota</taxon>
        <taxon>Alphaproteobacteria</taxon>
        <taxon>Hyphomicrobiales</taxon>
        <taxon>Phyllobacteriaceae</taxon>
        <taxon>Chelativorans</taxon>
    </lineage>
</organism>
<reference key="1">
    <citation type="submission" date="2006-06" db="EMBL/GenBank/DDBJ databases">
        <title>Complete sequence of chromosome of Mesorhizobium sp. BNC1.</title>
        <authorList>
            <consortium name="US DOE Joint Genome Institute"/>
            <person name="Copeland A."/>
            <person name="Lucas S."/>
            <person name="Lapidus A."/>
            <person name="Barry K."/>
            <person name="Detter J.C."/>
            <person name="Glavina del Rio T."/>
            <person name="Hammon N."/>
            <person name="Israni S."/>
            <person name="Dalin E."/>
            <person name="Tice H."/>
            <person name="Pitluck S."/>
            <person name="Chertkov O."/>
            <person name="Brettin T."/>
            <person name="Bruce D."/>
            <person name="Han C."/>
            <person name="Tapia R."/>
            <person name="Gilna P."/>
            <person name="Schmutz J."/>
            <person name="Larimer F."/>
            <person name="Land M."/>
            <person name="Hauser L."/>
            <person name="Kyrpides N."/>
            <person name="Mikhailova N."/>
            <person name="Richardson P."/>
        </authorList>
    </citation>
    <scope>NUCLEOTIDE SEQUENCE [LARGE SCALE GENOMIC DNA]</scope>
    <source>
        <strain>BNC1</strain>
    </source>
</reference>
<feature type="chain" id="PRO_1000060304" description="Phosphoenolpyruvate carboxykinase (ATP)">
    <location>
        <begin position="1"/>
        <end position="536"/>
    </location>
</feature>
<feature type="binding site" evidence="1">
    <location>
        <position position="61"/>
    </location>
    <ligand>
        <name>substrate</name>
    </ligand>
</feature>
<feature type="binding site" evidence="1">
    <location>
        <position position="195"/>
    </location>
    <ligand>
        <name>substrate</name>
    </ligand>
</feature>
<feature type="binding site" evidence="1">
    <location>
        <position position="201"/>
    </location>
    <ligand>
        <name>ATP</name>
        <dbReference type="ChEBI" id="CHEBI:30616"/>
    </ligand>
</feature>
<feature type="binding site" evidence="1">
    <location>
        <position position="201"/>
    </location>
    <ligand>
        <name>Mn(2+)</name>
        <dbReference type="ChEBI" id="CHEBI:29035"/>
    </ligand>
</feature>
<feature type="binding site" evidence="1">
    <location>
        <position position="201"/>
    </location>
    <ligand>
        <name>substrate</name>
    </ligand>
</feature>
<feature type="binding site" evidence="1">
    <location>
        <position position="220"/>
    </location>
    <ligand>
        <name>ATP</name>
        <dbReference type="ChEBI" id="CHEBI:30616"/>
    </ligand>
</feature>
<feature type="binding site" evidence="1">
    <location>
        <position position="220"/>
    </location>
    <ligand>
        <name>Mn(2+)</name>
        <dbReference type="ChEBI" id="CHEBI:29035"/>
    </ligand>
</feature>
<feature type="binding site" evidence="1">
    <location>
        <begin position="236"/>
        <end position="244"/>
    </location>
    <ligand>
        <name>ATP</name>
        <dbReference type="ChEBI" id="CHEBI:30616"/>
    </ligand>
</feature>
<feature type="binding site" evidence="1">
    <location>
        <position position="257"/>
    </location>
    <ligand>
        <name>Mn(2+)</name>
        <dbReference type="ChEBI" id="CHEBI:29035"/>
    </ligand>
</feature>
<feature type="binding site" evidence="1">
    <location>
        <position position="285"/>
    </location>
    <ligand>
        <name>ATP</name>
        <dbReference type="ChEBI" id="CHEBI:30616"/>
    </ligand>
</feature>
<feature type="binding site" evidence="1">
    <location>
        <position position="322"/>
    </location>
    <ligand>
        <name>ATP</name>
        <dbReference type="ChEBI" id="CHEBI:30616"/>
    </ligand>
</feature>
<feature type="binding site" evidence="1">
    <location>
        <position position="322"/>
    </location>
    <ligand>
        <name>substrate</name>
    </ligand>
</feature>
<feature type="binding site" evidence="1">
    <location>
        <position position="447"/>
    </location>
    <ligand>
        <name>ATP</name>
        <dbReference type="ChEBI" id="CHEBI:30616"/>
    </ligand>
</feature>
<proteinExistence type="inferred from homology"/>
<gene>
    <name evidence="1" type="primary">pckA</name>
    <name type="ordered locus">Meso_3502</name>
</gene>
<keyword id="KW-0067">ATP-binding</keyword>
<keyword id="KW-0963">Cytoplasm</keyword>
<keyword id="KW-0210">Decarboxylase</keyword>
<keyword id="KW-0312">Gluconeogenesis</keyword>
<keyword id="KW-0456">Lyase</keyword>
<keyword id="KW-0464">Manganese</keyword>
<keyword id="KW-0479">Metal-binding</keyword>
<keyword id="KW-0547">Nucleotide-binding</keyword>